<evidence type="ECO:0000250" key="1">
    <source>
        <dbReference type="UniProtKB" id="Q16602"/>
    </source>
</evidence>
<evidence type="ECO:0000255" key="2"/>
<evidence type="ECO:0000305" key="3"/>
<gene>
    <name type="primary">calcrl</name>
    <name type="ORF">TEgg071c13.1</name>
</gene>
<reference key="1">
    <citation type="submission" date="2006-10" db="EMBL/GenBank/DDBJ databases">
        <authorList>
            <consortium name="Sanger Xenopus tropicalis EST/cDNA project"/>
        </authorList>
    </citation>
    <scope>NUCLEOTIDE SEQUENCE [LARGE SCALE MRNA]</scope>
    <source>
        <tissue>Egg</tissue>
    </source>
</reference>
<reference key="2">
    <citation type="submission" date="2006-08" db="EMBL/GenBank/DDBJ databases">
        <authorList>
            <consortium name="NIH - Xenopus Gene Collection (XGC) project"/>
        </authorList>
    </citation>
    <scope>NUCLEOTIDE SEQUENCE [LARGE SCALE MRNA]</scope>
    <source>
        <tissue>Brain</tissue>
    </source>
</reference>
<protein>
    <recommendedName>
        <fullName>Calcitonin gene-related peptide type 1 receptor</fullName>
        <shortName>CGRP type 1 receptor</shortName>
    </recommendedName>
    <alternativeName>
        <fullName>Calcitonin receptor-like receptor</fullName>
    </alternativeName>
</protein>
<comment type="function">
    <text evidence="1">May function as G protein-coupled receptor for calcitonin-gene-related peptides and adrenomedullin (By similarity). Specificity may be modulated by accessory proteins (By similarity). May activate cAMP-dependent pathway (By similarity).</text>
</comment>
<comment type="subcellular location">
    <subcellularLocation>
        <location evidence="1">Cell membrane</location>
        <topology evidence="1">Multi-pass membrane protein</topology>
    </subcellularLocation>
</comment>
<comment type="similarity">
    <text evidence="3">Belongs to the G-protein coupled receptor 2 family.</text>
</comment>
<comment type="sequence caution" evidence="3">
    <conflict type="erroneous initiation">
        <sequence resource="EMBL-CDS" id="CAJ81879"/>
    </conflict>
</comment>
<keyword id="KW-1003">Cell membrane</keyword>
<keyword id="KW-1015">Disulfide bond</keyword>
<keyword id="KW-0297">G-protein coupled receptor</keyword>
<keyword id="KW-0325">Glycoprotein</keyword>
<keyword id="KW-0472">Membrane</keyword>
<keyword id="KW-0675">Receptor</keyword>
<keyword id="KW-1185">Reference proteome</keyword>
<keyword id="KW-0732">Signal</keyword>
<keyword id="KW-0807">Transducer</keyword>
<keyword id="KW-0812">Transmembrane</keyword>
<keyword id="KW-1133">Transmembrane helix</keyword>
<dbReference type="EMBL" id="CR848554">
    <property type="protein sequence ID" value="CAJ81879.1"/>
    <property type="status" value="ALT_INIT"/>
    <property type="molecule type" value="mRNA"/>
</dbReference>
<dbReference type="EMBL" id="BC121843">
    <property type="protein sequence ID" value="AAI21844.1"/>
    <property type="molecule type" value="mRNA"/>
</dbReference>
<dbReference type="RefSeq" id="NP_001016893.1">
    <property type="nucleotide sequence ID" value="NM_001016893.3"/>
</dbReference>
<dbReference type="RefSeq" id="XP_012825895.1">
    <property type="nucleotide sequence ID" value="XM_012970441.2"/>
</dbReference>
<dbReference type="RefSeq" id="XP_012825896.1">
    <property type="nucleotide sequence ID" value="XM_012970442.2"/>
</dbReference>
<dbReference type="SMR" id="Q0P4Y4"/>
<dbReference type="FunCoup" id="Q0P4Y4">
    <property type="interactions" value="1264"/>
</dbReference>
<dbReference type="STRING" id="8364.ENSXETP00000020505"/>
<dbReference type="GlyCosmos" id="Q0P4Y4">
    <property type="glycosylation" value="3 sites, No reported glycans"/>
</dbReference>
<dbReference type="PaxDb" id="8364-ENSXETP00000030402"/>
<dbReference type="GeneID" id="549647"/>
<dbReference type="KEGG" id="xtr:549647"/>
<dbReference type="AGR" id="Xenbase:XB-GENE-5736126"/>
<dbReference type="CTD" id="10203"/>
<dbReference type="Xenbase" id="XB-GENE-5736126">
    <property type="gene designation" value="calcrl"/>
</dbReference>
<dbReference type="eggNOG" id="KOG4564">
    <property type="taxonomic scope" value="Eukaryota"/>
</dbReference>
<dbReference type="InParanoid" id="Q0P4Y4"/>
<dbReference type="OrthoDB" id="16753at2759"/>
<dbReference type="Reactome" id="R-XTR-418555">
    <property type="pathway name" value="G alpha (s) signalling events"/>
</dbReference>
<dbReference type="Reactome" id="R-XTR-419812">
    <property type="pathway name" value="Calcitonin-like ligand receptors"/>
</dbReference>
<dbReference type="Proteomes" id="UP000008143">
    <property type="component" value="Chromosome 9"/>
</dbReference>
<dbReference type="Bgee" id="ENSXETG00000013895">
    <property type="expression patterns" value="Expressed in heart and 14 other cell types or tissues"/>
</dbReference>
<dbReference type="ExpressionAtlas" id="Q0P4Y4">
    <property type="expression patterns" value="baseline and differential"/>
</dbReference>
<dbReference type="GO" id="GO:0005886">
    <property type="term" value="C:plasma membrane"/>
    <property type="evidence" value="ECO:0007669"/>
    <property type="project" value="UniProtKB-SubCell"/>
</dbReference>
<dbReference type="GO" id="GO:0004948">
    <property type="term" value="F:calcitonin receptor activity"/>
    <property type="evidence" value="ECO:0007669"/>
    <property type="project" value="InterPro"/>
</dbReference>
<dbReference type="GO" id="GO:0007166">
    <property type="term" value="P:cell surface receptor signaling pathway"/>
    <property type="evidence" value="ECO:0007669"/>
    <property type="project" value="InterPro"/>
</dbReference>
<dbReference type="CDD" id="cd15274">
    <property type="entry name" value="7tmB1_calcitonin_R"/>
    <property type="match status" value="1"/>
</dbReference>
<dbReference type="FunFam" id="1.20.1070.10:FF:000079">
    <property type="entry name" value="Calcitonin gene-related peptide type 1 receptor"/>
    <property type="match status" value="1"/>
</dbReference>
<dbReference type="FunFam" id="4.10.1240.10:FF:000011">
    <property type="entry name" value="Calcitonin gene-related peptide type 1 receptor"/>
    <property type="match status" value="1"/>
</dbReference>
<dbReference type="Gene3D" id="4.10.1240.10">
    <property type="entry name" value="GPCR, family 2, extracellular hormone receptor domain"/>
    <property type="match status" value="1"/>
</dbReference>
<dbReference type="Gene3D" id="1.20.1070.10">
    <property type="entry name" value="Rhodopsin 7-helix transmembrane proteins"/>
    <property type="match status" value="1"/>
</dbReference>
<dbReference type="InterPro" id="IPR050332">
    <property type="entry name" value="GPCR_2"/>
</dbReference>
<dbReference type="InterPro" id="IPR017981">
    <property type="entry name" value="GPCR_2-like_7TM"/>
</dbReference>
<dbReference type="InterPro" id="IPR003287">
    <property type="entry name" value="GPCR_2_calcitonin_rcpt_fam"/>
</dbReference>
<dbReference type="InterPro" id="IPR003289">
    <property type="entry name" value="GPCR_2_CGRP1_rcpt"/>
</dbReference>
<dbReference type="InterPro" id="IPR036445">
    <property type="entry name" value="GPCR_2_extracell_dom_sf"/>
</dbReference>
<dbReference type="InterPro" id="IPR001879">
    <property type="entry name" value="GPCR_2_extracellular_dom"/>
</dbReference>
<dbReference type="InterPro" id="IPR000832">
    <property type="entry name" value="GPCR_2_secretin-like"/>
</dbReference>
<dbReference type="InterPro" id="IPR017983">
    <property type="entry name" value="GPCR_2_secretin-like_CS"/>
</dbReference>
<dbReference type="PANTHER" id="PTHR45620:SF21">
    <property type="entry name" value="CALCITONIN GENE-RELATED PEPTIDE TYPE 1 RECEPTOR"/>
    <property type="match status" value="1"/>
</dbReference>
<dbReference type="PANTHER" id="PTHR45620">
    <property type="entry name" value="PDF RECEPTOR-LIKE PROTEIN-RELATED"/>
    <property type="match status" value="1"/>
</dbReference>
<dbReference type="Pfam" id="PF00002">
    <property type="entry name" value="7tm_2"/>
    <property type="match status" value="1"/>
</dbReference>
<dbReference type="Pfam" id="PF02793">
    <property type="entry name" value="HRM"/>
    <property type="match status" value="1"/>
</dbReference>
<dbReference type="PRINTS" id="PR01351">
    <property type="entry name" value="CGRPRECEPTOR"/>
</dbReference>
<dbReference type="PRINTS" id="PR01350">
    <property type="entry name" value="CTRFAMILY"/>
</dbReference>
<dbReference type="PRINTS" id="PR00249">
    <property type="entry name" value="GPCRSECRETIN"/>
</dbReference>
<dbReference type="SMART" id="SM00008">
    <property type="entry name" value="HormR"/>
    <property type="match status" value="1"/>
</dbReference>
<dbReference type="SUPFAM" id="SSF81321">
    <property type="entry name" value="Family A G protein-coupled receptor-like"/>
    <property type="match status" value="1"/>
</dbReference>
<dbReference type="SUPFAM" id="SSF111418">
    <property type="entry name" value="Hormone receptor domain"/>
    <property type="match status" value="1"/>
</dbReference>
<dbReference type="PROSITE" id="PS00649">
    <property type="entry name" value="G_PROTEIN_RECEP_F2_1"/>
    <property type="match status" value="1"/>
</dbReference>
<dbReference type="PROSITE" id="PS00650">
    <property type="entry name" value="G_PROTEIN_RECEP_F2_2"/>
    <property type="match status" value="1"/>
</dbReference>
<dbReference type="PROSITE" id="PS50227">
    <property type="entry name" value="G_PROTEIN_RECEP_F2_3"/>
    <property type="match status" value="1"/>
</dbReference>
<dbReference type="PROSITE" id="PS50261">
    <property type="entry name" value="G_PROTEIN_RECEP_F2_4"/>
    <property type="match status" value="1"/>
</dbReference>
<proteinExistence type="evidence at transcript level"/>
<accession>Q0P4Y4</accession>
<accession>Q28DX2</accession>
<organism>
    <name type="scientific">Xenopus tropicalis</name>
    <name type="common">Western clawed frog</name>
    <name type="synonym">Silurana tropicalis</name>
    <dbReference type="NCBI Taxonomy" id="8364"/>
    <lineage>
        <taxon>Eukaryota</taxon>
        <taxon>Metazoa</taxon>
        <taxon>Chordata</taxon>
        <taxon>Craniata</taxon>
        <taxon>Vertebrata</taxon>
        <taxon>Euteleostomi</taxon>
        <taxon>Amphibia</taxon>
        <taxon>Batrachia</taxon>
        <taxon>Anura</taxon>
        <taxon>Pipoidea</taxon>
        <taxon>Pipidae</taxon>
        <taxon>Xenopodinae</taxon>
        <taxon>Xenopus</taxon>
        <taxon>Silurana</taxon>
    </lineage>
</organism>
<feature type="signal peptide" evidence="2">
    <location>
        <begin position="1"/>
        <end position="28"/>
    </location>
</feature>
<feature type="chain" id="PRO_0000373837" description="Calcitonin gene-related peptide type 1 receptor">
    <location>
        <begin position="29"/>
        <end position="472"/>
    </location>
</feature>
<feature type="topological domain" description="Extracellular" evidence="3">
    <location>
        <begin position="29"/>
        <end position="149"/>
    </location>
</feature>
<feature type="transmembrane region" description="Helical; Name=1" evidence="1">
    <location>
        <begin position="150"/>
        <end position="174"/>
    </location>
</feature>
<feature type="topological domain" description="Cytoplasmic" evidence="3">
    <location>
        <begin position="175"/>
        <end position="185"/>
    </location>
</feature>
<feature type="transmembrane region" description="Helical; Name=2" evidence="1">
    <location>
        <begin position="186"/>
        <end position="208"/>
    </location>
</feature>
<feature type="topological domain" description="Extracellular" evidence="3">
    <location>
        <begin position="209"/>
        <end position="219"/>
    </location>
</feature>
<feature type="transmembrane region" description="Helical; Name=3" evidence="1">
    <location>
        <begin position="220"/>
        <end position="248"/>
    </location>
</feature>
<feature type="topological domain" description="Cytoplasmic" evidence="3">
    <location>
        <begin position="249"/>
        <end position="262"/>
    </location>
</feature>
<feature type="transmembrane region" description="Helical; Name=4" evidence="1">
    <location>
        <begin position="263"/>
        <end position="283"/>
    </location>
</feature>
<feature type="topological domain" description="Extracellular" evidence="3">
    <location>
        <begin position="284"/>
        <end position="299"/>
    </location>
</feature>
<feature type="transmembrane region" description="Helical; Name=5" evidence="1">
    <location>
        <begin position="300"/>
        <end position="324"/>
    </location>
</feature>
<feature type="topological domain" description="Cytoplasmic" evidence="3">
    <location>
        <begin position="325"/>
        <end position="339"/>
    </location>
</feature>
<feature type="transmembrane region" description="Helical; Name=6" evidence="1">
    <location>
        <begin position="340"/>
        <end position="361"/>
    </location>
</feature>
<feature type="topological domain" description="Extracellular" evidence="3">
    <location>
        <begin position="362"/>
        <end position="376"/>
    </location>
</feature>
<feature type="transmembrane region" description="Helical; Name=7" evidence="1">
    <location>
        <begin position="377"/>
        <end position="397"/>
    </location>
</feature>
<feature type="topological domain" description="Cytoplasmic" evidence="3">
    <location>
        <begin position="398"/>
        <end position="472"/>
    </location>
</feature>
<feature type="glycosylation site" description="N-linked (GlcNAc...) asparagine" evidence="2">
    <location>
        <position position="76"/>
    </location>
</feature>
<feature type="glycosylation site" description="N-linked (GlcNAc...) asparagine" evidence="2">
    <location>
        <position position="128"/>
    </location>
</feature>
<feature type="glycosylation site" description="N-linked (GlcNAc...) asparagine" evidence="2">
    <location>
        <position position="133"/>
    </location>
</feature>
<feature type="disulfide bond" evidence="1">
    <location>
        <begin position="58"/>
        <end position="84"/>
    </location>
</feature>
<feature type="disulfide bond" evidence="1">
    <location>
        <begin position="75"/>
        <end position="115"/>
    </location>
</feature>
<feature type="disulfide bond" evidence="1">
    <location>
        <begin position="98"/>
        <end position="137"/>
    </location>
</feature>
<sequence>MGLLLRSALFKYIIIVLIMLNLRGYVLAEQEQGSQIPLEEIIQVGVTRNKIMTAQYECYQKIMQEPANGKEGHFCNRTWDGWLCWGDVSAGVISEQRCPDYFQDFDPSEKVTKECGKNGHWFRHPDSNRTWTNYTRCNTFTHEKVKTALNLYYLTIIGHGLSIASLLISLGIFFYFKNLSCQRITLHKNLFFSFVCNSIITIISLSAVANNQALVATNPVSCKISQFIHLYLMGCNYFWMLCEGIYLHTLIVVAVFAEKQHLMWYYLLGWGFPLIPACIHAVARSLYYNDNCWISSETHLLYIIHGPICAALLVNLFFLLNIVRVLITKLKVTHQAESNLYMKAVRATLILVPLLGIEFVLFPWKPEGRIAEEIYDYVMHILMHYQGLLVATIFCFFNGEVQAVLKRHWNQYKIQFGSSFAHSEGLRSASYTVSSISEIQGTTYTHDYSEQSNGKNCHDMENVFFKTEKQYM</sequence>
<name>CALRL_XENTR</name>